<gene>
    <name evidence="1" type="primary">gpmA</name>
    <name type="ordered locus">Sca_1912</name>
</gene>
<organism>
    <name type="scientific">Staphylococcus carnosus (strain TM300)</name>
    <dbReference type="NCBI Taxonomy" id="396513"/>
    <lineage>
        <taxon>Bacteria</taxon>
        <taxon>Bacillati</taxon>
        <taxon>Bacillota</taxon>
        <taxon>Bacilli</taxon>
        <taxon>Bacillales</taxon>
        <taxon>Staphylococcaceae</taxon>
        <taxon>Staphylococcus</taxon>
    </lineage>
</organism>
<proteinExistence type="inferred from homology"/>
<evidence type="ECO:0000255" key="1">
    <source>
        <dbReference type="HAMAP-Rule" id="MF_01039"/>
    </source>
</evidence>
<sequence>MPTLILCRHGQSVWNAENLFTGWTDVDLSDQGVEEATTSGDRLKQEGIEIDVAFTSVLQRAIKTTYHLLERSNQLFVPLYKSWRLNERHYGGLQGLNKDAAREEFGEEQVHIWRRSYDIAPPDATAEQREADLADRKYQGLDERVIPTSESLKDTLERVIPYWNDAIAPELLTGKTVLVSAHGNSLRALIKHIEGVSDEDIVGYEIKTGAPLIYELDDNLGFVSKHYL</sequence>
<protein>
    <recommendedName>
        <fullName evidence="1">2,3-bisphosphoglycerate-dependent phosphoglycerate mutase</fullName>
        <shortName evidence="1">BPG-dependent PGAM</shortName>
        <shortName evidence="1">PGAM</shortName>
        <shortName evidence="1">Phosphoglyceromutase</shortName>
        <shortName evidence="1">dPGM</shortName>
        <ecNumber evidence="1">5.4.2.11</ecNumber>
    </recommendedName>
</protein>
<accession>B9DL85</accession>
<name>GPMA_STACT</name>
<comment type="function">
    <text evidence="1">Catalyzes the interconversion of 2-phosphoglycerate and 3-phosphoglycerate.</text>
</comment>
<comment type="catalytic activity">
    <reaction evidence="1">
        <text>(2R)-2-phosphoglycerate = (2R)-3-phosphoglycerate</text>
        <dbReference type="Rhea" id="RHEA:15901"/>
        <dbReference type="ChEBI" id="CHEBI:58272"/>
        <dbReference type="ChEBI" id="CHEBI:58289"/>
        <dbReference type="EC" id="5.4.2.11"/>
    </reaction>
</comment>
<comment type="pathway">
    <text evidence="1">Carbohydrate degradation; glycolysis; pyruvate from D-glyceraldehyde 3-phosphate: step 3/5.</text>
</comment>
<comment type="similarity">
    <text evidence="1">Belongs to the phosphoglycerate mutase family. BPG-dependent PGAM subfamily.</text>
</comment>
<reference key="1">
    <citation type="journal article" date="2009" name="Appl. Environ. Microbiol.">
        <title>Genome analysis of the meat starter culture bacterium Staphylococcus carnosus TM300.</title>
        <authorList>
            <person name="Rosenstein R."/>
            <person name="Nerz C."/>
            <person name="Biswas L."/>
            <person name="Resch A."/>
            <person name="Raddatz G."/>
            <person name="Schuster S.C."/>
            <person name="Goetz F."/>
        </authorList>
    </citation>
    <scope>NUCLEOTIDE SEQUENCE [LARGE SCALE GENOMIC DNA]</scope>
    <source>
        <strain>TM300</strain>
    </source>
</reference>
<dbReference type="EC" id="5.4.2.11" evidence="1"/>
<dbReference type="EMBL" id="AM295250">
    <property type="protein sequence ID" value="CAL28818.1"/>
    <property type="molecule type" value="Genomic_DNA"/>
</dbReference>
<dbReference type="RefSeq" id="WP_015901154.1">
    <property type="nucleotide sequence ID" value="NC_012121.1"/>
</dbReference>
<dbReference type="SMR" id="B9DL85"/>
<dbReference type="GeneID" id="93794367"/>
<dbReference type="KEGG" id="sca:SCA_1912"/>
<dbReference type="eggNOG" id="COG0588">
    <property type="taxonomic scope" value="Bacteria"/>
</dbReference>
<dbReference type="HOGENOM" id="CLU_033323_1_5_9"/>
<dbReference type="OrthoDB" id="9781415at2"/>
<dbReference type="BioCyc" id="SCAR396513:SCA_RS09695-MONOMER"/>
<dbReference type="UniPathway" id="UPA00109">
    <property type="reaction ID" value="UER00186"/>
</dbReference>
<dbReference type="Proteomes" id="UP000000444">
    <property type="component" value="Chromosome"/>
</dbReference>
<dbReference type="GO" id="GO:0004619">
    <property type="term" value="F:phosphoglycerate mutase activity"/>
    <property type="evidence" value="ECO:0007669"/>
    <property type="project" value="UniProtKB-EC"/>
</dbReference>
<dbReference type="GO" id="GO:0006094">
    <property type="term" value="P:gluconeogenesis"/>
    <property type="evidence" value="ECO:0007669"/>
    <property type="project" value="UniProtKB-UniRule"/>
</dbReference>
<dbReference type="GO" id="GO:0006096">
    <property type="term" value="P:glycolytic process"/>
    <property type="evidence" value="ECO:0007669"/>
    <property type="project" value="UniProtKB-UniRule"/>
</dbReference>
<dbReference type="CDD" id="cd07067">
    <property type="entry name" value="HP_PGM_like"/>
    <property type="match status" value="1"/>
</dbReference>
<dbReference type="FunFam" id="3.40.50.1240:FF:000003">
    <property type="entry name" value="2,3-bisphosphoglycerate-dependent phosphoglycerate mutase"/>
    <property type="match status" value="1"/>
</dbReference>
<dbReference type="Gene3D" id="3.40.50.1240">
    <property type="entry name" value="Phosphoglycerate mutase-like"/>
    <property type="match status" value="1"/>
</dbReference>
<dbReference type="HAMAP" id="MF_01039">
    <property type="entry name" value="PGAM_GpmA"/>
    <property type="match status" value="1"/>
</dbReference>
<dbReference type="InterPro" id="IPR013078">
    <property type="entry name" value="His_Pase_superF_clade-1"/>
</dbReference>
<dbReference type="InterPro" id="IPR029033">
    <property type="entry name" value="His_PPase_superfam"/>
</dbReference>
<dbReference type="InterPro" id="IPR001345">
    <property type="entry name" value="PG/BPGM_mutase_AS"/>
</dbReference>
<dbReference type="InterPro" id="IPR005952">
    <property type="entry name" value="Phosphogly_mut1"/>
</dbReference>
<dbReference type="NCBIfam" id="TIGR01258">
    <property type="entry name" value="pgm_1"/>
    <property type="match status" value="1"/>
</dbReference>
<dbReference type="NCBIfam" id="NF010713">
    <property type="entry name" value="PRK14115.1"/>
    <property type="match status" value="1"/>
</dbReference>
<dbReference type="NCBIfam" id="NF010717">
    <property type="entry name" value="PRK14119.1"/>
    <property type="match status" value="1"/>
</dbReference>
<dbReference type="PANTHER" id="PTHR11931">
    <property type="entry name" value="PHOSPHOGLYCERATE MUTASE"/>
    <property type="match status" value="1"/>
</dbReference>
<dbReference type="Pfam" id="PF00300">
    <property type="entry name" value="His_Phos_1"/>
    <property type="match status" value="1"/>
</dbReference>
<dbReference type="SMART" id="SM00855">
    <property type="entry name" value="PGAM"/>
    <property type="match status" value="1"/>
</dbReference>
<dbReference type="SUPFAM" id="SSF53254">
    <property type="entry name" value="Phosphoglycerate mutase-like"/>
    <property type="match status" value="1"/>
</dbReference>
<dbReference type="PROSITE" id="PS00175">
    <property type="entry name" value="PG_MUTASE"/>
    <property type="match status" value="1"/>
</dbReference>
<keyword id="KW-0312">Gluconeogenesis</keyword>
<keyword id="KW-0324">Glycolysis</keyword>
<keyword id="KW-0413">Isomerase</keyword>
<keyword id="KW-1185">Reference proteome</keyword>
<feature type="chain" id="PRO_1000149530" description="2,3-bisphosphoglycerate-dependent phosphoglycerate mutase">
    <location>
        <begin position="1"/>
        <end position="228"/>
    </location>
</feature>
<feature type="active site" description="Tele-phosphohistidine intermediate" evidence="1">
    <location>
        <position position="9"/>
    </location>
</feature>
<feature type="active site" description="Proton donor/acceptor" evidence="1">
    <location>
        <position position="87"/>
    </location>
</feature>
<feature type="binding site" evidence="1">
    <location>
        <begin position="8"/>
        <end position="15"/>
    </location>
    <ligand>
        <name>substrate</name>
    </ligand>
</feature>
<feature type="binding site" evidence="1">
    <location>
        <begin position="21"/>
        <end position="22"/>
    </location>
    <ligand>
        <name>substrate</name>
    </ligand>
</feature>
<feature type="binding site" evidence="1">
    <location>
        <position position="60"/>
    </location>
    <ligand>
        <name>substrate</name>
    </ligand>
</feature>
<feature type="binding site" evidence="1">
    <location>
        <begin position="87"/>
        <end position="90"/>
    </location>
    <ligand>
        <name>substrate</name>
    </ligand>
</feature>
<feature type="binding site" evidence="1">
    <location>
        <position position="98"/>
    </location>
    <ligand>
        <name>substrate</name>
    </ligand>
</feature>
<feature type="binding site" evidence="1">
    <location>
        <begin position="114"/>
        <end position="115"/>
    </location>
    <ligand>
        <name>substrate</name>
    </ligand>
</feature>
<feature type="binding site" evidence="1">
    <location>
        <begin position="183"/>
        <end position="184"/>
    </location>
    <ligand>
        <name>substrate</name>
    </ligand>
</feature>
<feature type="site" description="Transition state stabilizer" evidence="1">
    <location>
        <position position="182"/>
    </location>
</feature>